<name>YQGF_ECO55</name>
<proteinExistence type="inferred from homology"/>
<accession>B7LFL2</accession>
<gene>
    <name evidence="1" type="primary">yqgF</name>
    <name type="ordered locus">EC55989_3242</name>
</gene>
<keyword id="KW-0963">Cytoplasm</keyword>
<keyword id="KW-0378">Hydrolase</keyword>
<keyword id="KW-0540">Nuclease</keyword>
<keyword id="KW-1185">Reference proteome</keyword>
<keyword id="KW-0690">Ribosome biogenesis</keyword>
<dbReference type="EC" id="3.1.-.-" evidence="1"/>
<dbReference type="EMBL" id="CU928145">
    <property type="protein sequence ID" value="CAU99238.1"/>
    <property type="molecule type" value="Genomic_DNA"/>
</dbReference>
<dbReference type="SMR" id="B7LFL2"/>
<dbReference type="KEGG" id="eck:EC55989_3242"/>
<dbReference type="HOGENOM" id="CLU_098240_3_0_6"/>
<dbReference type="Proteomes" id="UP000000746">
    <property type="component" value="Chromosome"/>
</dbReference>
<dbReference type="GO" id="GO:0005829">
    <property type="term" value="C:cytosol"/>
    <property type="evidence" value="ECO:0007669"/>
    <property type="project" value="TreeGrafter"/>
</dbReference>
<dbReference type="GO" id="GO:0004518">
    <property type="term" value="F:nuclease activity"/>
    <property type="evidence" value="ECO:0007669"/>
    <property type="project" value="UniProtKB-KW"/>
</dbReference>
<dbReference type="GO" id="GO:0000967">
    <property type="term" value="P:rRNA 5'-end processing"/>
    <property type="evidence" value="ECO:0007669"/>
    <property type="project" value="UniProtKB-UniRule"/>
</dbReference>
<dbReference type="CDD" id="cd16964">
    <property type="entry name" value="YqgF"/>
    <property type="match status" value="1"/>
</dbReference>
<dbReference type="FunFam" id="3.30.420.140:FF:000002">
    <property type="entry name" value="Putative pre-16S rRNA nuclease"/>
    <property type="match status" value="1"/>
</dbReference>
<dbReference type="Gene3D" id="3.30.420.140">
    <property type="entry name" value="YqgF/RNase H-like domain"/>
    <property type="match status" value="1"/>
</dbReference>
<dbReference type="HAMAP" id="MF_00651">
    <property type="entry name" value="Nuclease_YqgF"/>
    <property type="match status" value="1"/>
</dbReference>
<dbReference type="InterPro" id="IPR012337">
    <property type="entry name" value="RNaseH-like_sf"/>
</dbReference>
<dbReference type="InterPro" id="IPR005227">
    <property type="entry name" value="YqgF"/>
</dbReference>
<dbReference type="InterPro" id="IPR006641">
    <property type="entry name" value="YqgF/RNaseH-like_dom"/>
</dbReference>
<dbReference type="InterPro" id="IPR037027">
    <property type="entry name" value="YqgF/RNaseH-like_dom_sf"/>
</dbReference>
<dbReference type="NCBIfam" id="TIGR00250">
    <property type="entry name" value="RNAse_H_YqgF"/>
    <property type="match status" value="1"/>
</dbReference>
<dbReference type="PANTHER" id="PTHR33317">
    <property type="entry name" value="POLYNUCLEOTIDYL TRANSFERASE, RIBONUCLEASE H-LIKE SUPERFAMILY PROTEIN"/>
    <property type="match status" value="1"/>
</dbReference>
<dbReference type="PANTHER" id="PTHR33317:SF4">
    <property type="entry name" value="POLYNUCLEOTIDYL TRANSFERASE, RIBONUCLEASE H-LIKE SUPERFAMILY PROTEIN"/>
    <property type="match status" value="1"/>
</dbReference>
<dbReference type="Pfam" id="PF03652">
    <property type="entry name" value="RuvX"/>
    <property type="match status" value="1"/>
</dbReference>
<dbReference type="SMART" id="SM00732">
    <property type="entry name" value="YqgFc"/>
    <property type="match status" value="1"/>
</dbReference>
<dbReference type="SUPFAM" id="SSF53098">
    <property type="entry name" value="Ribonuclease H-like"/>
    <property type="match status" value="1"/>
</dbReference>
<evidence type="ECO:0000255" key="1">
    <source>
        <dbReference type="HAMAP-Rule" id="MF_00651"/>
    </source>
</evidence>
<feature type="chain" id="PRO_1000147480" description="Putative pre-16S rRNA nuclease">
    <location>
        <begin position="1"/>
        <end position="138"/>
    </location>
</feature>
<sequence>MSGTLLAFDFGTKSIGVAVGQRITGTARPLPAIKAQDGTPDWNIIERLLKEWQPDEIIVGLPLNMDGTEQPLTARARKFANRIHGRFGVEVKLHDERLSTVEARSGLFEQGGYRALNKGKVDSASAVIILESYFEQGY</sequence>
<reference key="1">
    <citation type="journal article" date="2009" name="PLoS Genet.">
        <title>Organised genome dynamics in the Escherichia coli species results in highly diverse adaptive paths.</title>
        <authorList>
            <person name="Touchon M."/>
            <person name="Hoede C."/>
            <person name="Tenaillon O."/>
            <person name="Barbe V."/>
            <person name="Baeriswyl S."/>
            <person name="Bidet P."/>
            <person name="Bingen E."/>
            <person name="Bonacorsi S."/>
            <person name="Bouchier C."/>
            <person name="Bouvet O."/>
            <person name="Calteau A."/>
            <person name="Chiapello H."/>
            <person name="Clermont O."/>
            <person name="Cruveiller S."/>
            <person name="Danchin A."/>
            <person name="Diard M."/>
            <person name="Dossat C."/>
            <person name="Karoui M.E."/>
            <person name="Frapy E."/>
            <person name="Garry L."/>
            <person name="Ghigo J.M."/>
            <person name="Gilles A.M."/>
            <person name="Johnson J."/>
            <person name="Le Bouguenec C."/>
            <person name="Lescat M."/>
            <person name="Mangenot S."/>
            <person name="Martinez-Jehanne V."/>
            <person name="Matic I."/>
            <person name="Nassif X."/>
            <person name="Oztas S."/>
            <person name="Petit M.A."/>
            <person name="Pichon C."/>
            <person name="Rouy Z."/>
            <person name="Ruf C.S."/>
            <person name="Schneider D."/>
            <person name="Tourret J."/>
            <person name="Vacherie B."/>
            <person name="Vallenet D."/>
            <person name="Medigue C."/>
            <person name="Rocha E.P.C."/>
            <person name="Denamur E."/>
        </authorList>
    </citation>
    <scope>NUCLEOTIDE SEQUENCE [LARGE SCALE GENOMIC DNA]</scope>
    <source>
        <strain>55989 / EAEC</strain>
    </source>
</reference>
<protein>
    <recommendedName>
        <fullName evidence="1">Putative pre-16S rRNA nuclease</fullName>
        <ecNumber evidence="1">3.1.-.-</ecNumber>
    </recommendedName>
</protein>
<comment type="function">
    <text evidence="1">Could be a nuclease involved in processing of the 5'-end of pre-16S rRNA.</text>
</comment>
<comment type="subcellular location">
    <subcellularLocation>
        <location evidence="1">Cytoplasm</location>
    </subcellularLocation>
</comment>
<comment type="similarity">
    <text evidence="1">Belongs to the YqgF nuclease family.</text>
</comment>
<organism>
    <name type="scientific">Escherichia coli (strain 55989 / EAEC)</name>
    <dbReference type="NCBI Taxonomy" id="585055"/>
    <lineage>
        <taxon>Bacteria</taxon>
        <taxon>Pseudomonadati</taxon>
        <taxon>Pseudomonadota</taxon>
        <taxon>Gammaproteobacteria</taxon>
        <taxon>Enterobacterales</taxon>
        <taxon>Enterobacteriaceae</taxon>
        <taxon>Escherichia</taxon>
    </lineage>
</organism>